<protein>
    <recommendedName>
        <fullName evidence="1">Urease subunit alpha</fullName>
        <ecNumber evidence="1">3.5.1.5</ecNumber>
    </recommendedName>
    <alternativeName>
        <fullName evidence="1">Urea amidohydrolase subunit alpha</fullName>
    </alternativeName>
</protein>
<evidence type="ECO:0000255" key="1">
    <source>
        <dbReference type="HAMAP-Rule" id="MF_01953"/>
    </source>
</evidence>
<keyword id="KW-0963">Cytoplasm</keyword>
<keyword id="KW-0378">Hydrolase</keyword>
<keyword id="KW-0479">Metal-binding</keyword>
<keyword id="KW-0533">Nickel</keyword>
<sequence length="566" mass="60740">MSKISRQAYAEIFGPTTGDRLRLADTELFIEIEKDFTTYGEEVKFGGGKVIRDGMGQSQRNYKDVMDTVITNAVIVEHWGIVKADIGLKGGKIAGIGKAGNPDIQPDVTMAIGGATEIIAGEGMIVTAGGVDTHIHFICPQQIEEALMSGVTTMIGGGTGPAVGTAATTCTPGPWHIHSMLSAADAFPMNLGFLGKGNVSLPTPLEEQIHAGAIGLKLHEDWGSTPAAIDNCLSVADRLDVQVAIHSDTLNEGGFLEHTLAAFKDRTIHTFHTEGAGGGHAPDIIAAVGQANVLPSSTNPTRPFTVNTLDEHLDMLMVCHHLDPAIAEDVAFAESRIRRETIAAEDILHDIGAISMMSSDSQAMGRVGEVIMRTWQTAHKMKVQRGSLAGDPARNDNFRVKRYIAKYTINPAITHGISHVVGSLEVGKVADIVLWKPAFFGVKPSMILKSGMIAAAQMGDPNASIPTPQPVHYRMMFGAYGGGLKTSMTFVSQSAFDAGIGDMLKLNKPVVAVKNMRHLRKRDMIHNSATPKMEVDSETYEVRADGELLVCEPAKILPLAQRYFLF</sequence>
<gene>
    <name evidence="1" type="primary">ureC</name>
    <name type="ordered locus">mma_1814</name>
</gene>
<organism>
    <name type="scientific">Janthinobacterium sp. (strain Marseille)</name>
    <name type="common">Minibacterium massiliensis</name>
    <dbReference type="NCBI Taxonomy" id="375286"/>
    <lineage>
        <taxon>Bacteria</taxon>
        <taxon>Pseudomonadati</taxon>
        <taxon>Pseudomonadota</taxon>
        <taxon>Betaproteobacteria</taxon>
        <taxon>Burkholderiales</taxon>
        <taxon>Oxalobacteraceae</taxon>
        <taxon>Janthinobacterium</taxon>
    </lineage>
</organism>
<proteinExistence type="inferred from homology"/>
<accession>A6SZ07</accession>
<comment type="catalytic activity">
    <reaction evidence="1">
        <text>urea + 2 H2O + H(+) = hydrogencarbonate + 2 NH4(+)</text>
        <dbReference type="Rhea" id="RHEA:20557"/>
        <dbReference type="ChEBI" id="CHEBI:15377"/>
        <dbReference type="ChEBI" id="CHEBI:15378"/>
        <dbReference type="ChEBI" id="CHEBI:16199"/>
        <dbReference type="ChEBI" id="CHEBI:17544"/>
        <dbReference type="ChEBI" id="CHEBI:28938"/>
        <dbReference type="EC" id="3.5.1.5"/>
    </reaction>
</comment>
<comment type="cofactor">
    <cofactor evidence="1">
        <name>Ni cation</name>
        <dbReference type="ChEBI" id="CHEBI:25516"/>
    </cofactor>
    <text evidence="1">Binds 2 nickel ions per subunit.</text>
</comment>
<comment type="pathway">
    <text evidence="1">Nitrogen metabolism; urea degradation; CO(2) and NH(3) from urea (urease route): step 1/1.</text>
</comment>
<comment type="subunit">
    <text evidence="1">Heterotrimer of UreA (gamma), UreB (beta) and UreC (alpha) subunits. Three heterotrimers associate to form the active enzyme.</text>
</comment>
<comment type="subcellular location">
    <subcellularLocation>
        <location evidence="1">Cytoplasm</location>
    </subcellularLocation>
</comment>
<comment type="PTM">
    <text evidence="1">Carboxylation allows a single lysine to coordinate two nickel ions.</text>
</comment>
<comment type="similarity">
    <text evidence="1">Belongs to the metallo-dependent hydrolases superfamily. Urease alpha subunit family.</text>
</comment>
<feature type="chain" id="PRO_1000216197" description="Urease subunit alpha">
    <location>
        <begin position="1"/>
        <end position="566"/>
    </location>
</feature>
<feature type="domain" description="Urease" evidence="1">
    <location>
        <begin position="129"/>
        <end position="566"/>
    </location>
</feature>
<feature type="active site" description="Proton donor" evidence="1">
    <location>
        <position position="320"/>
    </location>
</feature>
<feature type="binding site" evidence="1">
    <location>
        <position position="134"/>
    </location>
    <ligand>
        <name>Ni(2+)</name>
        <dbReference type="ChEBI" id="CHEBI:49786"/>
        <label>1</label>
    </ligand>
</feature>
<feature type="binding site" evidence="1">
    <location>
        <position position="136"/>
    </location>
    <ligand>
        <name>Ni(2+)</name>
        <dbReference type="ChEBI" id="CHEBI:49786"/>
        <label>1</label>
    </ligand>
</feature>
<feature type="binding site" description="via carbamate group" evidence="1">
    <location>
        <position position="217"/>
    </location>
    <ligand>
        <name>Ni(2+)</name>
        <dbReference type="ChEBI" id="CHEBI:49786"/>
        <label>1</label>
    </ligand>
</feature>
<feature type="binding site" description="via carbamate group" evidence="1">
    <location>
        <position position="217"/>
    </location>
    <ligand>
        <name>Ni(2+)</name>
        <dbReference type="ChEBI" id="CHEBI:49786"/>
        <label>2</label>
    </ligand>
</feature>
<feature type="binding site" evidence="1">
    <location>
        <position position="219"/>
    </location>
    <ligand>
        <name>substrate</name>
    </ligand>
</feature>
<feature type="binding site" evidence="1">
    <location>
        <position position="246"/>
    </location>
    <ligand>
        <name>Ni(2+)</name>
        <dbReference type="ChEBI" id="CHEBI:49786"/>
        <label>2</label>
    </ligand>
</feature>
<feature type="binding site" evidence="1">
    <location>
        <position position="272"/>
    </location>
    <ligand>
        <name>Ni(2+)</name>
        <dbReference type="ChEBI" id="CHEBI:49786"/>
        <label>2</label>
    </ligand>
</feature>
<feature type="binding site" evidence="1">
    <location>
        <position position="360"/>
    </location>
    <ligand>
        <name>Ni(2+)</name>
        <dbReference type="ChEBI" id="CHEBI:49786"/>
        <label>1</label>
    </ligand>
</feature>
<feature type="modified residue" description="N6-carboxylysine" evidence="1">
    <location>
        <position position="217"/>
    </location>
</feature>
<reference key="1">
    <citation type="journal article" date="2007" name="PLoS Genet.">
        <title>Genome analysis of Minibacterium massiliensis highlights the convergent evolution of water-living bacteria.</title>
        <authorList>
            <person name="Audic S."/>
            <person name="Robert C."/>
            <person name="Campagna B."/>
            <person name="Parinello H."/>
            <person name="Claverie J.-M."/>
            <person name="Raoult D."/>
            <person name="Drancourt M."/>
        </authorList>
    </citation>
    <scope>NUCLEOTIDE SEQUENCE [LARGE SCALE GENOMIC DNA]</scope>
    <source>
        <strain>Marseille</strain>
    </source>
</reference>
<dbReference type="EC" id="3.5.1.5" evidence="1"/>
<dbReference type="EMBL" id="CP000269">
    <property type="protein sequence ID" value="ABR88653.1"/>
    <property type="molecule type" value="Genomic_DNA"/>
</dbReference>
<dbReference type="RefSeq" id="WP_012079667.1">
    <property type="nucleotide sequence ID" value="NC_009659.1"/>
</dbReference>
<dbReference type="SMR" id="A6SZ07"/>
<dbReference type="STRING" id="375286.mma_1814"/>
<dbReference type="MEROPS" id="M38.982"/>
<dbReference type="KEGG" id="mms:mma_1814"/>
<dbReference type="eggNOG" id="COG0804">
    <property type="taxonomic scope" value="Bacteria"/>
</dbReference>
<dbReference type="HOGENOM" id="CLU_000980_0_0_4"/>
<dbReference type="OrthoDB" id="9802793at2"/>
<dbReference type="UniPathway" id="UPA00258">
    <property type="reaction ID" value="UER00370"/>
</dbReference>
<dbReference type="Proteomes" id="UP000006388">
    <property type="component" value="Chromosome"/>
</dbReference>
<dbReference type="GO" id="GO:0005737">
    <property type="term" value="C:cytoplasm"/>
    <property type="evidence" value="ECO:0007669"/>
    <property type="project" value="UniProtKB-SubCell"/>
</dbReference>
<dbReference type="GO" id="GO:0016151">
    <property type="term" value="F:nickel cation binding"/>
    <property type="evidence" value="ECO:0007669"/>
    <property type="project" value="UniProtKB-UniRule"/>
</dbReference>
<dbReference type="GO" id="GO:0009039">
    <property type="term" value="F:urease activity"/>
    <property type="evidence" value="ECO:0007669"/>
    <property type="project" value="UniProtKB-UniRule"/>
</dbReference>
<dbReference type="GO" id="GO:0043419">
    <property type="term" value="P:urea catabolic process"/>
    <property type="evidence" value="ECO:0007669"/>
    <property type="project" value="UniProtKB-UniRule"/>
</dbReference>
<dbReference type="CDD" id="cd00375">
    <property type="entry name" value="Urease_alpha"/>
    <property type="match status" value="1"/>
</dbReference>
<dbReference type="Gene3D" id="3.20.20.140">
    <property type="entry name" value="Metal-dependent hydrolases"/>
    <property type="match status" value="1"/>
</dbReference>
<dbReference type="Gene3D" id="2.30.40.10">
    <property type="entry name" value="Urease, subunit C, domain 1"/>
    <property type="match status" value="1"/>
</dbReference>
<dbReference type="HAMAP" id="MF_01953">
    <property type="entry name" value="Urease_alpha"/>
    <property type="match status" value="1"/>
</dbReference>
<dbReference type="InterPro" id="IPR006680">
    <property type="entry name" value="Amidohydro-rel"/>
</dbReference>
<dbReference type="InterPro" id="IPR011059">
    <property type="entry name" value="Metal-dep_hydrolase_composite"/>
</dbReference>
<dbReference type="InterPro" id="IPR032466">
    <property type="entry name" value="Metal_Hydrolase"/>
</dbReference>
<dbReference type="InterPro" id="IPR011612">
    <property type="entry name" value="Urease_alpha_N_dom"/>
</dbReference>
<dbReference type="InterPro" id="IPR050112">
    <property type="entry name" value="Urease_alpha_subunit"/>
</dbReference>
<dbReference type="InterPro" id="IPR017950">
    <property type="entry name" value="Urease_AS"/>
</dbReference>
<dbReference type="InterPro" id="IPR005848">
    <property type="entry name" value="Urease_asu"/>
</dbReference>
<dbReference type="InterPro" id="IPR017951">
    <property type="entry name" value="Urease_asu_c"/>
</dbReference>
<dbReference type="InterPro" id="IPR029754">
    <property type="entry name" value="Urease_Ni-bd"/>
</dbReference>
<dbReference type="NCBIfam" id="NF009685">
    <property type="entry name" value="PRK13206.1"/>
    <property type="match status" value="1"/>
</dbReference>
<dbReference type="NCBIfam" id="NF009686">
    <property type="entry name" value="PRK13207.1"/>
    <property type="match status" value="1"/>
</dbReference>
<dbReference type="NCBIfam" id="TIGR01792">
    <property type="entry name" value="urease_alph"/>
    <property type="match status" value="1"/>
</dbReference>
<dbReference type="PANTHER" id="PTHR43440">
    <property type="entry name" value="UREASE"/>
    <property type="match status" value="1"/>
</dbReference>
<dbReference type="PANTHER" id="PTHR43440:SF1">
    <property type="entry name" value="UREASE"/>
    <property type="match status" value="1"/>
</dbReference>
<dbReference type="Pfam" id="PF01979">
    <property type="entry name" value="Amidohydro_1"/>
    <property type="match status" value="1"/>
</dbReference>
<dbReference type="Pfam" id="PF00449">
    <property type="entry name" value="Urease_alpha"/>
    <property type="match status" value="1"/>
</dbReference>
<dbReference type="PRINTS" id="PR01752">
    <property type="entry name" value="UREASE"/>
</dbReference>
<dbReference type="SUPFAM" id="SSF51338">
    <property type="entry name" value="Composite domain of metallo-dependent hydrolases"/>
    <property type="match status" value="2"/>
</dbReference>
<dbReference type="SUPFAM" id="SSF51556">
    <property type="entry name" value="Metallo-dependent hydrolases"/>
    <property type="match status" value="1"/>
</dbReference>
<dbReference type="PROSITE" id="PS01120">
    <property type="entry name" value="UREASE_1"/>
    <property type="match status" value="1"/>
</dbReference>
<dbReference type="PROSITE" id="PS00145">
    <property type="entry name" value="UREASE_2"/>
    <property type="match status" value="1"/>
</dbReference>
<dbReference type="PROSITE" id="PS51368">
    <property type="entry name" value="UREASE_3"/>
    <property type="match status" value="1"/>
</dbReference>
<name>URE1_JANMA</name>